<organism>
    <name type="scientific">Finegoldia magna (strain ATCC 29328 / DSM 20472 / WAL 2508)</name>
    <name type="common">Peptostreptococcus magnus</name>
    <dbReference type="NCBI Taxonomy" id="334413"/>
    <lineage>
        <taxon>Bacteria</taxon>
        <taxon>Bacillati</taxon>
        <taxon>Bacillota</taxon>
        <taxon>Tissierellia</taxon>
        <taxon>Tissierellales</taxon>
        <taxon>Peptoniphilaceae</taxon>
        <taxon>Finegoldia</taxon>
    </lineage>
</organism>
<feature type="chain" id="PRO_1000127355" description="Large ribosomal subunit protein bL35">
    <location>
        <begin position="1"/>
        <end position="63"/>
    </location>
</feature>
<keyword id="KW-1185">Reference proteome</keyword>
<keyword id="KW-0687">Ribonucleoprotein</keyword>
<keyword id="KW-0689">Ribosomal protein</keyword>
<sequence length="63" mass="7288">MPKMKTHRGSAKRFRRTGTGKLRRFKAYASHLTGKKSAKRIRNLRKGTTVSEADMKRIDKMIP</sequence>
<protein>
    <recommendedName>
        <fullName evidence="1">Large ribosomal subunit protein bL35</fullName>
    </recommendedName>
    <alternativeName>
        <fullName evidence="2">50S ribosomal protein L35</fullName>
    </alternativeName>
</protein>
<gene>
    <name evidence="1" type="primary">rpmI</name>
    <name type="ordered locus">FMG_0696</name>
</gene>
<accession>B0S174</accession>
<reference key="1">
    <citation type="journal article" date="2008" name="DNA Res.">
        <title>Complete genome sequence of Finegoldia magna, an anaerobic opportunistic pathogen.</title>
        <authorList>
            <person name="Goto T."/>
            <person name="Yamashita A."/>
            <person name="Hirakawa H."/>
            <person name="Matsutani M."/>
            <person name="Todo K."/>
            <person name="Ohshima K."/>
            <person name="Toh H."/>
            <person name="Miyamoto K."/>
            <person name="Kuhara S."/>
            <person name="Hattori M."/>
            <person name="Shimizu T."/>
            <person name="Akimoto S."/>
        </authorList>
    </citation>
    <scope>NUCLEOTIDE SEQUENCE [LARGE SCALE GENOMIC DNA]</scope>
    <source>
        <strain>ATCC 29328 / DSM 20472 / WAL 2508</strain>
    </source>
</reference>
<evidence type="ECO:0000255" key="1">
    <source>
        <dbReference type="HAMAP-Rule" id="MF_00514"/>
    </source>
</evidence>
<evidence type="ECO:0000305" key="2"/>
<comment type="similarity">
    <text evidence="1">Belongs to the bacterial ribosomal protein bL35 family.</text>
</comment>
<dbReference type="EMBL" id="AP008971">
    <property type="protein sequence ID" value="BAG08114.1"/>
    <property type="molecule type" value="Genomic_DNA"/>
</dbReference>
<dbReference type="RefSeq" id="WP_002838103.1">
    <property type="nucleotide sequence ID" value="NC_010376.1"/>
</dbReference>
<dbReference type="SMR" id="B0S174"/>
<dbReference type="STRING" id="334413.FMG_0696"/>
<dbReference type="GeneID" id="60840097"/>
<dbReference type="KEGG" id="fma:FMG_0696"/>
<dbReference type="eggNOG" id="COG0291">
    <property type="taxonomic scope" value="Bacteria"/>
</dbReference>
<dbReference type="HOGENOM" id="CLU_169643_4_3_9"/>
<dbReference type="Proteomes" id="UP000001319">
    <property type="component" value="Chromosome"/>
</dbReference>
<dbReference type="GO" id="GO:0022625">
    <property type="term" value="C:cytosolic large ribosomal subunit"/>
    <property type="evidence" value="ECO:0007669"/>
    <property type="project" value="TreeGrafter"/>
</dbReference>
<dbReference type="GO" id="GO:0003735">
    <property type="term" value="F:structural constituent of ribosome"/>
    <property type="evidence" value="ECO:0007669"/>
    <property type="project" value="InterPro"/>
</dbReference>
<dbReference type="GO" id="GO:0006412">
    <property type="term" value="P:translation"/>
    <property type="evidence" value="ECO:0007669"/>
    <property type="project" value="UniProtKB-UniRule"/>
</dbReference>
<dbReference type="FunFam" id="4.10.410.60:FF:000001">
    <property type="entry name" value="50S ribosomal protein L35"/>
    <property type="match status" value="1"/>
</dbReference>
<dbReference type="Gene3D" id="4.10.410.60">
    <property type="match status" value="1"/>
</dbReference>
<dbReference type="HAMAP" id="MF_00514">
    <property type="entry name" value="Ribosomal_bL35"/>
    <property type="match status" value="1"/>
</dbReference>
<dbReference type="InterPro" id="IPR001706">
    <property type="entry name" value="Ribosomal_bL35"/>
</dbReference>
<dbReference type="InterPro" id="IPR021137">
    <property type="entry name" value="Ribosomal_bL35-like"/>
</dbReference>
<dbReference type="InterPro" id="IPR018265">
    <property type="entry name" value="Ribosomal_bL35_CS"/>
</dbReference>
<dbReference type="InterPro" id="IPR037229">
    <property type="entry name" value="Ribosomal_bL35_sf"/>
</dbReference>
<dbReference type="NCBIfam" id="TIGR00001">
    <property type="entry name" value="rpmI_bact"/>
    <property type="match status" value="1"/>
</dbReference>
<dbReference type="PANTHER" id="PTHR33343">
    <property type="entry name" value="54S RIBOSOMAL PROTEIN BL35M"/>
    <property type="match status" value="1"/>
</dbReference>
<dbReference type="PANTHER" id="PTHR33343:SF1">
    <property type="entry name" value="LARGE RIBOSOMAL SUBUNIT PROTEIN BL35M"/>
    <property type="match status" value="1"/>
</dbReference>
<dbReference type="Pfam" id="PF01632">
    <property type="entry name" value="Ribosomal_L35p"/>
    <property type="match status" value="1"/>
</dbReference>
<dbReference type="PRINTS" id="PR00064">
    <property type="entry name" value="RIBOSOMALL35"/>
</dbReference>
<dbReference type="SUPFAM" id="SSF143034">
    <property type="entry name" value="L35p-like"/>
    <property type="match status" value="1"/>
</dbReference>
<dbReference type="PROSITE" id="PS00936">
    <property type="entry name" value="RIBOSOMAL_L35"/>
    <property type="match status" value="1"/>
</dbReference>
<name>RL35_FINM2</name>
<proteinExistence type="inferred from homology"/>